<protein>
    <recommendedName>
        <fullName evidence="1">UPF0298 protein SPP_0758</fullName>
    </recommendedName>
</protein>
<evidence type="ECO:0000255" key="1">
    <source>
        <dbReference type="HAMAP-Rule" id="MF_01126"/>
    </source>
</evidence>
<proteinExistence type="inferred from homology"/>
<name>Y758_STRZP</name>
<comment type="subcellular location">
    <subcellularLocation>
        <location evidence="1">Cytoplasm</location>
    </subcellularLocation>
</comment>
<comment type="similarity">
    <text evidence="1">Belongs to the UPF0298 family.</text>
</comment>
<feature type="chain" id="PRO_1000164067" description="UPF0298 protein SPP_0758">
    <location>
        <begin position="1"/>
        <end position="82"/>
    </location>
</feature>
<organism>
    <name type="scientific">Streptococcus pneumoniae (strain P1031)</name>
    <dbReference type="NCBI Taxonomy" id="488223"/>
    <lineage>
        <taxon>Bacteria</taxon>
        <taxon>Bacillati</taxon>
        <taxon>Bacillota</taxon>
        <taxon>Bacilli</taxon>
        <taxon>Lactobacillales</taxon>
        <taxon>Streptococcaceae</taxon>
        <taxon>Streptococcus</taxon>
    </lineage>
</organism>
<keyword id="KW-0963">Cytoplasm</keyword>
<gene>
    <name type="ordered locus">SPP_0758</name>
</gene>
<dbReference type="EMBL" id="CP000920">
    <property type="protein sequence ID" value="ACO21970.1"/>
    <property type="molecule type" value="Genomic_DNA"/>
</dbReference>
<dbReference type="RefSeq" id="WP_000462126.1">
    <property type="nucleotide sequence ID" value="NC_012467.1"/>
</dbReference>
<dbReference type="SMR" id="C1CJJ6"/>
<dbReference type="KEGG" id="spp:SPP_0758"/>
<dbReference type="HOGENOM" id="CLU_159890_1_0_9"/>
<dbReference type="GO" id="GO:0005737">
    <property type="term" value="C:cytoplasm"/>
    <property type="evidence" value="ECO:0007669"/>
    <property type="project" value="UniProtKB-SubCell"/>
</dbReference>
<dbReference type="HAMAP" id="MF_01126">
    <property type="entry name" value="UPF0298"/>
    <property type="match status" value="1"/>
</dbReference>
<dbReference type="InterPro" id="IPR016979">
    <property type="entry name" value="DUF2129"/>
</dbReference>
<dbReference type="NCBIfam" id="NF002631">
    <property type="entry name" value="PRK02302.1"/>
    <property type="match status" value="1"/>
</dbReference>
<dbReference type="Pfam" id="PF09902">
    <property type="entry name" value="DUF2129"/>
    <property type="match status" value="1"/>
</dbReference>
<dbReference type="PIRSF" id="PIRSF031653">
    <property type="entry name" value="UCP031653"/>
    <property type="match status" value="1"/>
</dbReference>
<sequence>MFEKVNRSGLIIYLYYNRDAKKLQDYGDITYHSKKHRYLQLYVPTQEVEQLVGRLSKEKFIKKVRVCHIQELETPFVGNLYR</sequence>
<reference key="1">
    <citation type="journal article" date="2010" name="Genome Biol.">
        <title>Structure and dynamics of the pan-genome of Streptococcus pneumoniae and closely related species.</title>
        <authorList>
            <person name="Donati C."/>
            <person name="Hiller N.L."/>
            <person name="Tettelin H."/>
            <person name="Muzzi A."/>
            <person name="Croucher N.J."/>
            <person name="Angiuoli S.V."/>
            <person name="Oggioni M."/>
            <person name="Dunning Hotopp J.C."/>
            <person name="Hu F.Z."/>
            <person name="Riley D.R."/>
            <person name="Covacci A."/>
            <person name="Mitchell T.J."/>
            <person name="Bentley S.D."/>
            <person name="Kilian M."/>
            <person name="Ehrlich G.D."/>
            <person name="Rappuoli R."/>
            <person name="Moxon E.R."/>
            <person name="Masignani V."/>
        </authorList>
    </citation>
    <scope>NUCLEOTIDE SEQUENCE [LARGE SCALE GENOMIC DNA]</scope>
    <source>
        <strain>P1031</strain>
    </source>
</reference>
<accession>C1CJJ6</accession>